<organism>
    <name type="scientific">Phaeosphaeria nodorum (strain SN15 / ATCC MYA-4574 / FGSC 10173)</name>
    <name type="common">Glume blotch fungus</name>
    <name type="synonym">Parastagonospora nodorum</name>
    <dbReference type="NCBI Taxonomy" id="321614"/>
    <lineage>
        <taxon>Eukaryota</taxon>
        <taxon>Fungi</taxon>
        <taxon>Dikarya</taxon>
        <taxon>Ascomycota</taxon>
        <taxon>Pezizomycotina</taxon>
        <taxon>Dothideomycetes</taxon>
        <taxon>Pleosporomycetidae</taxon>
        <taxon>Pleosporales</taxon>
        <taxon>Pleosporineae</taxon>
        <taxon>Phaeosphaeriaceae</taxon>
        <taxon>Parastagonospora</taxon>
    </lineage>
</organism>
<proteinExistence type="inferred from homology"/>
<protein>
    <recommendedName>
        <fullName evidence="7">FAD-dependent monooxygenase elcH</fullName>
        <ecNumber evidence="6">1.-.-.-</ecNumber>
    </recommendedName>
    <alternativeName>
        <fullName evidence="7">Elsinochrome C biosynthesis cluster protein H</fullName>
    </alternativeName>
</protein>
<reference key="1">
    <citation type="journal article" date="2007" name="Plant Cell">
        <title>Dothideomycete-plant interactions illuminated by genome sequencing and EST analysis of the wheat pathogen Stagonospora nodorum.</title>
        <authorList>
            <person name="Hane J.K."/>
            <person name="Lowe R.G.T."/>
            <person name="Solomon P.S."/>
            <person name="Tan K.-C."/>
            <person name="Schoch C.L."/>
            <person name="Spatafora J.W."/>
            <person name="Crous P.W."/>
            <person name="Kodira C.D."/>
            <person name="Birren B.W."/>
            <person name="Galagan J.E."/>
            <person name="Torriani S.F.F."/>
            <person name="McDonald B.A."/>
            <person name="Oliver R.P."/>
        </authorList>
    </citation>
    <scope>NUCLEOTIDE SEQUENCE [LARGE SCALE GENOMIC DNA]</scope>
    <source>
        <strain>SN15 / ATCC MYA-4574 / FGSC 10173</strain>
    </source>
</reference>
<reference key="2">
    <citation type="journal article" date="2017" name="Environ. Microbiol.">
        <title>Functional genomics-guided discovery of a light-activated phytotoxin in the wheat pathogen Parastagonospora nodorum via pathway activation.</title>
        <authorList>
            <person name="Chooi Y.H."/>
            <person name="Zhang G."/>
            <person name="Hu J."/>
            <person name="Muria-Gonzalez M.J."/>
            <person name="Tran P.N."/>
            <person name="Pettitt A."/>
            <person name="Maier A.G."/>
            <person name="Barrow R.A."/>
            <person name="Solomon P.S."/>
        </authorList>
    </citation>
    <scope>FUNCTION</scope>
</reference>
<reference key="3">
    <citation type="journal article" date="2019" name="Chem. Sci.">
        <title>Heterologous biosynthesis of elsinochrome A sheds light on the formation of the photosensitive perylenequinone system.</title>
        <authorList>
            <person name="Hu J."/>
            <person name="Sarrami F."/>
            <person name="Li H."/>
            <person name="Zhang G."/>
            <person name="Stubbs K.A."/>
            <person name="Lacey E."/>
            <person name="Stewart S.G."/>
            <person name="Karton A."/>
            <person name="Piggott A.M."/>
            <person name="Chooi Y.H."/>
        </authorList>
    </citation>
    <scope>FUNCTION</scope>
    <scope>PATHWAY</scope>
</reference>
<comment type="function">
    <text evidence="2 5 6 9">FAD-dependent monooxygenase; part of the gene cluster that mediates the biosynthesis of elsinochrome C, a perelyenequinone phytotoxin structurally similar to cercosporin (PubMed:28251756, PubMed:30809363). The first step of elsinochrome C biosynthesis is performed by the polyketide synthase elcA which catalyzes the formation of nor-toralactone (PubMed:28251756, PubMed:30809363). The starter unit acyltransferase (SAT) domain of elcA initiates polyketide extension by the selective utilization of acetyl-CoA, which is elongated to the heptaketide in the beta-ketoacyl synthase (KS) domain by successive condensations with six malonyl units introduced by the malonyl acyltransferase (MAT) domain (By similarity). The product template (PT) domain catalyzes C4-C9 and C2-C11 aldol cyclizations and dehydrations to a trihydroxynaphthalene, which is thought to be delivered to the thioesterase (TE) domain for product release (By similarity). The bifunctional enzyme elcB then methylates nor-toralactone to toralactone before conducting an unusual oxidative aromatic ring opening (PubMed:28251756, PubMed:30809363). The next step in perylenequinone biosynthesis is an O-methylation at the nascent OH-6 of the elcB product performed by the O-methyltransferase elcD (PubMed:30809363). The oxidative coupling of the two monomeric naphthol units in perylenequinone biosynthesis is catalyzed by the FAD-dependent monooxygenase elcE and the multicopper oxidase elcG (PubMed:30809363). ElcG might catalyze the first intermolecular coupling in a regio- and stereo-selective manner via a phenol radical coupling mechanism and the elcE could forge the second C-C bond intramolecularly via a hydride transfer mechanism (PubMed:30809363). The fasciclin domain-containing protein elcF might also play a role duting this step (Probable). The last piece of the puzzle in the biosynthesis of elsinochrome C is the additional annulation by enolate coupling to afford the dihydrobenzo(ghi)perylenequinone system, catalyzed by the FAD-dependent monooxygenase elcH (PubMed:30809363).</text>
</comment>
<comment type="cofactor">
    <cofactor evidence="8">
        <name>FAD</name>
        <dbReference type="ChEBI" id="CHEBI:57692"/>
    </cofactor>
</comment>
<comment type="pathway">
    <text evidence="6">Secondary metabolite biosynthesis.</text>
</comment>
<comment type="similarity">
    <text evidence="8">Belongs to the paxM FAD-dependent monooxygenase family.</text>
</comment>
<evidence type="ECO:0000250" key="1">
    <source>
        <dbReference type="UniProtKB" id="B8M9J8"/>
    </source>
</evidence>
<evidence type="ECO:0000250" key="2">
    <source>
        <dbReference type="UniProtKB" id="Q6DQW3"/>
    </source>
</evidence>
<evidence type="ECO:0000255" key="3"/>
<evidence type="ECO:0000255" key="4">
    <source>
        <dbReference type="PROSITE-ProRule" id="PRU00498"/>
    </source>
</evidence>
<evidence type="ECO:0000269" key="5">
    <source>
    </source>
</evidence>
<evidence type="ECO:0000269" key="6">
    <source>
    </source>
</evidence>
<evidence type="ECO:0000303" key="7">
    <source>
    </source>
</evidence>
<evidence type="ECO:0000305" key="8"/>
<evidence type="ECO:0000305" key="9">
    <source>
    </source>
</evidence>
<gene>
    <name evidence="7" type="primary">elcH</name>
    <name type="ORF">SNOG_08601</name>
</gene>
<name>ELCH_PHANO</name>
<dbReference type="EC" id="1.-.-.-" evidence="6"/>
<dbReference type="EMBL" id="CH445337">
    <property type="protein sequence ID" value="EAT83769.2"/>
    <property type="molecule type" value="Genomic_DNA"/>
</dbReference>
<dbReference type="RefSeq" id="XP_001798910.1">
    <property type="nucleotide sequence ID" value="XM_001798858.1"/>
</dbReference>
<dbReference type="SMR" id="Q0UI13"/>
<dbReference type="STRING" id="321614.Q0UI13"/>
<dbReference type="GlyCosmos" id="Q0UI13">
    <property type="glycosylation" value="3 sites, No reported glycans"/>
</dbReference>
<dbReference type="EnsemblFungi" id="SNOT_08601">
    <property type="protein sequence ID" value="SNOT_08601"/>
    <property type="gene ID" value="SNOG_08601"/>
</dbReference>
<dbReference type="GeneID" id="5975809"/>
<dbReference type="KEGG" id="pno:SNOG_08601"/>
<dbReference type="VEuPathDB" id="FungiDB:JI435_086010"/>
<dbReference type="eggNOG" id="KOG2614">
    <property type="taxonomic scope" value="Eukaryota"/>
</dbReference>
<dbReference type="HOGENOM" id="CLU_009665_6_5_1"/>
<dbReference type="InParanoid" id="Q0UI13"/>
<dbReference type="Proteomes" id="UP000001055">
    <property type="component" value="Unassembled WGS sequence"/>
</dbReference>
<dbReference type="GO" id="GO:0004497">
    <property type="term" value="F:monooxygenase activity"/>
    <property type="evidence" value="ECO:0007669"/>
    <property type="project" value="UniProtKB-KW"/>
</dbReference>
<dbReference type="GO" id="GO:0044550">
    <property type="term" value="P:secondary metabolite biosynthetic process"/>
    <property type="evidence" value="ECO:0000318"/>
    <property type="project" value="GO_Central"/>
</dbReference>
<dbReference type="Gene3D" id="3.50.50.60">
    <property type="entry name" value="FAD/NAD(P)-binding domain"/>
    <property type="match status" value="1"/>
</dbReference>
<dbReference type="InterPro" id="IPR036188">
    <property type="entry name" value="FAD/NAD-bd_sf"/>
</dbReference>
<dbReference type="InterPro" id="IPR051104">
    <property type="entry name" value="FAD_monoxygenase"/>
</dbReference>
<dbReference type="PANTHER" id="PTHR46720:SF3">
    <property type="entry name" value="FAD-BINDING DOMAIN-CONTAINING PROTEIN-RELATED"/>
    <property type="match status" value="1"/>
</dbReference>
<dbReference type="PANTHER" id="PTHR46720">
    <property type="entry name" value="HYDROXYLASE, PUTATIVE (AFU_ORTHOLOGUE AFUA_3G01460)-RELATED"/>
    <property type="match status" value="1"/>
</dbReference>
<dbReference type="PRINTS" id="PR00420">
    <property type="entry name" value="RNGMNOXGNASE"/>
</dbReference>
<dbReference type="SUPFAM" id="SSF51905">
    <property type="entry name" value="FAD/NAD(P)-binding domain"/>
    <property type="match status" value="1"/>
</dbReference>
<keyword id="KW-0274">FAD</keyword>
<keyword id="KW-0285">Flavoprotein</keyword>
<keyword id="KW-0325">Glycoprotein</keyword>
<keyword id="KW-0503">Monooxygenase</keyword>
<keyword id="KW-0560">Oxidoreductase</keyword>
<keyword id="KW-0732">Signal</keyword>
<feature type="signal peptide" evidence="3">
    <location>
        <begin position="1"/>
        <end position="19"/>
    </location>
</feature>
<feature type="chain" id="PRO_5004177843" description="FAD-dependent monooxygenase elcH">
    <location>
        <begin position="20"/>
        <end position="485"/>
    </location>
</feature>
<feature type="binding site" evidence="1">
    <location>
        <position position="59"/>
    </location>
    <ligand>
        <name>FAD</name>
        <dbReference type="ChEBI" id="CHEBI:57692"/>
    </ligand>
</feature>
<feature type="binding site" evidence="1">
    <location>
        <position position="73"/>
    </location>
    <ligand>
        <name>FAD</name>
        <dbReference type="ChEBI" id="CHEBI:57692"/>
    </ligand>
</feature>
<feature type="glycosylation site" description="N-linked (GlcNAc...) asparagine" evidence="4">
    <location>
        <position position="126"/>
    </location>
</feature>
<feature type="glycosylation site" description="N-linked (GlcNAc...) asparagine" evidence="4">
    <location>
        <position position="147"/>
    </location>
</feature>
<feature type="glycosylation site" description="N-linked (GlcNAc...) asparagine" evidence="4">
    <location>
        <position position="157"/>
    </location>
</feature>
<accession>Q0UI13</accession>
<sequence length="485" mass="53569">MFTLRSLAILAVFAATALASKQSSNDRELVVAIYGGGLASATLAQALKGSSNLNVQYFDPALDLTPTSFRLFGFDPKVHDALALVNEEAGGAIERSGWYPEEPSVVVVGQGSDADTVVLDWAQLKNTTHHPQVTVVDPKPFLQQMLNGTDESRLHPNKTLVSITRKDLSAKYPLELKFQDGSIQHADVLIGDDGPFGQMRSEVLGAKHPANAPVFMNFLSAVAHVAPDDAEKLLGQKYGNRDLGRRFERVGMGSWFLNAYLEGFSTCLGSFYTEEAYDLSQFTRTTSVKELTARFSNLNEADNSQKILSGYSGLRLIPEIEHSPAPTYINGLVAMQGNAAHFMTNFQQLGPSQQIEDAMILGTLLRSAHSRADVEAALYAYDTVRRPRSQWVSEHGKRLGWLWTGMVEDVGIDAKKLKKAMLQWKQDSEAFDLKAHKNEAVKIMKQTIKERSGSEKIITQEEKIKAGFQGLWEAMREKSGEQVEL</sequence>